<protein>
    <recommendedName>
        <fullName>Outer membrane protein YopN</fullName>
    </recommendedName>
    <alternativeName>
        <fullName>LcrE</fullName>
    </alternativeName>
    <alternativeName>
        <fullName>Yop4b</fullName>
    </alternativeName>
</protein>
<keyword id="KW-0106">Calcium</keyword>
<keyword id="KW-0998">Cell outer membrane</keyword>
<keyword id="KW-0903">Direct protein sequencing</keyword>
<keyword id="KW-0472">Membrane</keyword>
<keyword id="KW-0614">Plasmid</keyword>
<keyword id="KW-0843">Virulence</keyword>
<comment type="function">
    <text>Plays a major role in regulation of the low-calcium response. Seems to sense the calcium concentration and to transmit a signal to shut off yop transcription when the calcium concentration is high.</text>
</comment>
<comment type="subcellular location">
    <subcellularLocation>
        <location>Cell outer membrane</location>
    </subcellularLocation>
</comment>
<comment type="similarity">
    <text evidence="2">Belongs to the HrpJ/YopN family.</text>
</comment>
<sequence>MTTLHNLSYGNTPLHNERPEIASSQIVNQTLGQFRGESVQIVSGTLQSIADMAEEVTFVFSERKELSLDKRKLSDSQARVSDVEEQVNQYLSKVPELEQKQNVSELLSLLSNSPNISLSQLKAYLEGKSEEPSEQFKMLCGLRDALKGRPELAHLSHLVEQALVSMAEEQGETIVLGARITPEAYRESQSGVNPLQPLRDTYRDAVMGYQGIYAIWSDLQKRFPNGDIDSVILFLQKALSADLQSQQSGSGREKLGIVINDLQKLKEFGSVSDQVKGFWQFFSEGKTNGVRPF</sequence>
<name>YOPN_YERPS</name>
<gene>
    <name type="primary">yopN</name>
    <name type="synonym">lcrE</name>
    <name type="ordered locus">pYV0065</name>
</gene>
<proteinExistence type="evidence at protein level"/>
<organism>
    <name type="scientific">Yersinia pseudotuberculosis serotype I (strain IP32953)</name>
    <dbReference type="NCBI Taxonomy" id="273123"/>
    <lineage>
        <taxon>Bacteria</taxon>
        <taxon>Pseudomonadati</taxon>
        <taxon>Pseudomonadota</taxon>
        <taxon>Gammaproteobacteria</taxon>
        <taxon>Enterobacterales</taxon>
        <taxon>Yersiniaceae</taxon>
        <taxon>Yersinia</taxon>
    </lineage>
</organism>
<accession>Q663K1</accession>
<accession>P16160</accession>
<dbReference type="EMBL" id="X51833">
    <property type="protein sequence ID" value="CAA36129.1"/>
    <property type="molecule type" value="Genomic_DNA"/>
</dbReference>
<dbReference type="EMBL" id="BX936399">
    <property type="protein sequence ID" value="CAF25408.1"/>
    <property type="molecule type" value="Genomic_DNA"/>
</dbReference>
<dbReference type="PIR" id="S15320">
    <property type="entry name" value="S15320"/>
</dbReference>
<dbReference type="RefSeq" id="WP_011191384.1">
    <property type="nucleotide sequence ID" value="NC_006153.2"/>
</dbReference>
<dbReference type="SMR" id="Q663K1"/>
<dbReference type="KEGG" id="ypo:BZ17_4268"/>
<dbReference type="KEGG" id="yps:pYV0065"/>
<dbReference type="PATRIC" id="fig|273123.14.peg.4504"/>
<dbReference type="PHI-base" id="PHI:8619"/>
<dbReference type="PHI-base" id="PHI:9107"/>
<dbReference type="Proteomes" id="UP000001011">
    <property type="component" value="Plasmid pYV"/>
</dbReference>
<dbReference type="GO" id="GO:0009279">
    <property type="term" value="C:cell outer membrane"/>
    <property type="evidence" value="ECO:0007669"/>
    <property type="project" value="UniProtKB-SubCell"/>
</dbReference>
<dbReference type="GO" id="GO:0009986">
    <property type="term" value="C:cell surface"/>
    <property type="evidence" value="ECO:0007669"/>
    <property type="project" value="InterPro"/>
</dbReference>
<dbReference type="GO" id="GO:0050709">
    <property type="term" value="P:negative regulation of protein secretion"/>
    <property type="evidence" value="ECO:0007669"/>
    <property type="project" value="InterPro"/>
</dbReference>
<dbReference type="GO" id="GO:0030254">
    <property type="term" value="P:protein secretion by the type III secretion system"/>
    <property type="evidence" value="ECO:0007669"/>
    <property type="project" value="InterPro"/>
</dbReference>
<dbReference type="Gene3D" id="1.10.150.630">
    <property type="match status" value="1"/>
</dbReference>
<dbReference type="Gene3D" id="6.10.250.670">
    <property type="match status" value="1"/>
</dbReference>
<dbReference type="InterPro" id="IPR010812">
    <property type="entry name" value="HrpJ-like"/>
</dbReference>
<dbReference type="InterPro" id="IPR013401">
    <property type="entry name" value="T3SS_LcrE"/>
</dbReference>
<dbReference type="NCBIfam" id="TIGR02568">
    <property type="entry name" value="LcrE"/>
    <property type="match status" value="1"/>
</dbReference>
<dbReference type="Pfam" id="PF07201">
    <property type="entry name" value="HrpJ"/>
    <property type="match status" value="1"/>
</dbReference>
<dbReference type="SUPFAM" id="SSF140591">
    <property type="entry name" value="Type III secretion system domain"/>
    <property type="match status" value="1"/>
</dbReference>
<evidence type="ECO:0000269" key="1">
    <source>
    </source>
</evidence>
<evidence type="ECO:0000305" key="2"/>
<reference key="1">
    <citation type="journal article" date="1991" name="Mol. Microbiol.">
        <title>The surface-located YopN protein is involved in calcium signal transduction in Yersinia pseudotuberculosis.</title>
        <authorList>
            <person name="Forsberg A."/>
            <person name="Viitanen A.-M."/>
            <person name="Skurnik M."/>
            <person name="Wolf-Watz H."/>
        </authorList>
    </citation>
    <scope>NUCLEOTIDE SEQUENCE [GENOMIC DNA]</scope>
    <scope>PROTEIN SEQUENCE OF 2-9</scope>
    <source>
        <strain>YPIII / Serotype O:3</strain>
        <plasmid>pIB1</plasmid>
    </source>
</reference>
<reference key="2">
    <citation type="journal article" date="2004" name="Proc. Natl. Acad. Sci. U.S.A.">
        <title>Insights into the evolution of Yersinia pestis through whole-genome comparison with Yersinia pseudotuberculosis.</title>
        <authorList>
            <person name="Chain P.S.G."/>
            <person name="Carniel E."/>
            <person name="Larimer F.W."/>
            <person name="Lamerdin J."/>
            <person name="Stoutland P.O."/>
            <person name="Regala W.M."/>
            <person name="Georgescu A.M."/>
            <person name="Vergez L.M."/>
            <person name="Land M.L."/>
            <person name="Motin V.L."/>
            <person name="Brubaker R.R."/>
            <person name="Fowler J."/>
            <person name="Hinnebusch J."/>
            <person name="Marceau M."/>
            <person name="Medigue C."/>
            <person name="Simonet M."/>
            <person name="Chenal-Francisque V."/>
            <person name="Souza B."/>
            <person name="Dacheux D."/>
            <person name="Elliott J.M."/>
            <person name="Derbise A."/>
            <person name="Hauser L.J."/>
            <person name="Garcia E."/>
        </authorList>
    </citation>
    <scope>NUCLEOTIDE SEQUENCE [LARGE SCALE GENOMIC DNA]</scope>
    <source>
        <strain>IP32953</strain>
        <plasmid>pYV</plasmid>
    </source>
</reference>
<geneLocation type="plasmid">
    <name>pIB1</name>
</geneLocation>
<geneLocation type="plasmid">
    <name>pYV</name>
</geneLocation>
<feature type="initiator methionine" description="Removed" evidence="1">
    <location>
        <position position="1"/>
    </location>
</feature>
<feature type="chain" id="PRO_0000066372" description="Outer membrane protein YopN">
    <location>
        <begin position="2"/>
        <end position="293"/>
    </location>
</feature>
<feature type="sequence conflict" description="In Ref. 1; CAA36129." evidence="2" ref="1">
    <original>N</original>
    <variation>S</variation>
    <location>
        <position position="260"/>
    </location>
</feature>